<sequence length="551" mass="64003">MPSARLQQQFIRLWQCCEGKSQETTLNELAALLSCSRRHMRTLLNTMQDRGWLTWEAEVGRGKRSRLTFLYTGLALQQQRAEDLLEQDRIDQLVQLVGDKATVRQMLVSHLGRSFRQGRHILRVLYYRPLRNLLPGSALRRSETHIARQIFSSLTRINEENGELEADIAHHWQQISPLHWRFFLRPGVHFHHGRELEMDDVIASLKRINTLPLYSHIANIVSPTPWTLDIHLTQPDRWLPLLLGQVPAMILPREWETLSNFASHPIGTGPYAVIRNSTNQLKIQAFDDFFGYRALIDEVNVWVLPEIADEPAGGLMLKGPQGEEKEIESRLEEGCYYLLFDSRTHRGANQQVRDWVSYVLSPTNLVYFAEEQYQQLWFPAYGLLPRWHHARTIKSEKPAGLESLTLTFYQDHSEHRVIAGIMQQILASHQVTLEIKEISYDQWHEGEIESDIWLNSANFTLPLDFSLFAHLCEVPLLQHCIPIDWQADAARWRNGEMNLANWCQQLVASKAMVPLIHHWLIIQGQRSMRGLRMNTLGWFDFKSAWFAPPDP</sequence>
<feature type="chain" id="PRO_0000309243" description="HTH-type transcriptional regulator SgrR">
    <location>
        <begin position="1"/>
        <end position="551"/>
    </location>
</feature>
<feature type="domain" description="HTH marR-type" evidence="1">
    <location>
        <begin position="1"/>
        <end position="116"/>
    </location>
</feature>
<feature type="DNA-binding region" description="H-T-H motif" evidence="1">
    <location>
        <begin position="26"/>
        <end position="49"/>
    </location>
</feature>
<feature type="region of interest" description="Solute-binding" evidence="1">
    <location>
        <begin position="163"/>
        <end position="492"/>
    </location>
</feature>
<organism>
    <name type="scientific">Escherichia coli O1:K1 / APEC</name>
    <dbReference type="NCBI Taxonomy" id="405955"/>
    <lineage>
        <taxon>Bacteria</taxon>
        <taxon>Pseudomonadati</taxon>
        <taxon>Pseudomonadota</taxon>
        <taxon>Gammaproteobacteria</taxon>
        <taxon>Enterobacterales</taxon>
        <taxon>Enterobacteriaceae</taxon>
        <taxon>Escherichia</taxon>
    </lineage>
</organism>
<comment type="function">
    <text evidence="1">Activates the small RNA gene sgrS under glucose-phosphate stress conditions as well as yfdZ. Represses its own transcription under both stress and non-stress conditions. Might act as a sensor of the intracellular accumulation of phosphoglucose by binding these molecules in its C-terminal solute-binding domain.</text>
</comment>
<accession>A1A7B8</accession>
<dbReference type="EMBL" id="CP000468">
    <property type="protein sequence ID" value="ABI99557.1"/>
    <property type="molecule type" value="Genomic_DNA"/>
</dbReference>
<dbReference type="RefSeq" id="WP_001314420.1">
    <property type="nucleotide sequence ID" value="NZ_CADILS010000095.1"/>
</dbReference>
<dbReference type="SMR" id="A1A7B8"/>
<dbReference type="KEGG" id="ecv:APECO1_1913"/>
<dbReference type="HOGENOM" id="CLU_017028_12_3_6"/>
<dbReference type="Proteomes" id="UP000008216">
    <property type="component" value="Chromosome"/>
</dbReference>
<dbReference type="GO" id="GO:0003677">
    <property type="term" value="F:DNA binding"/>
    <property type="evidence" value="ECO:0007669"/>
    <property type="project" value="UniProtKB-KW"/>
</dbReference>
<dbReference type="GO" id="GO:1904680">
    <property type="term" value="F:peptide transmembrane transporter activity"/>
    <property type="evidence" value="ECO:0007669"/>
    <property type="project" value="TreeGrafter"/>
</dbReference>
<dbReference type="GO" id="GO:0045892">
    <property type="term" value="P:negative regulation of DNA-templated transcription"/>
    <property type="evidence" value="ECO:0007669"/>
    <property type="project" value="UniProtKB-UniRule"/>
</dbReference>
<dbReference type="GO" id="GO:0015833">
    <property type="term" value="P:peptide transport"/>
    <property type="evidence" value="ECO:0007669"/>
    <property type="project" value="TreeGrafter"/>
</dbReference>
<dbReference type="GO" id="GO:0045893">
    <property type="term" value="P:positive regulation of DNA-templated transcription"/>
    <property type="evidence" value="ECO:0007669"/>
    <property type="project" value="UniProtKB-UniRule"/>
</dbReference>
<dbReference type="CDD" id="cd08507">
    <property type="entry name" value="PBP2_SgrR_like"/>
    <property type="match status" value="1"/>
</dbReference>
<dbReference type="FunFam" id="3.40.190.10:FF:000070">
    <property type="entry name" value="HTH-type transcriptional regulator SgrR"/>
    <property type="match status" value="1"/>
</dbReference>
<dbReference type="Gene3D" id="3.40.190.10">
    <property type="entry name" value="Periplasmic binding protein-like II"/>
    <property type="match status" value="1"/>
</dbReference>
<dbReference type="HAMAP" id="MF_01449">
    <property type="entry name" value="HTH_type_SgrR"/>
    <property type="match status" value="1"/>
</dbReference>
<dbReference type="InterPro" id="IPR039424">
    <property type="entry name" value="SBP_5"/>
</dbReference>
<dbReference type="InterPro" id="IPR000914">
    <property type="entry name" value="SBP_5_dom"/>
</dbReference>
<dbReference type="InterPro" id="IPR025370">
    <property type="entry name" value="SgrR_HTH_N"/>
</dbReference>
<dbReference type="InterPro" id="IPR023767">
    <property type="entry name" value="Tscrpt_reg_SgrR"/>
</dbReference>
<dbReference type="NCBIfam" id="NF010149">
    <property type="entry name" value="PRK13626.1"/>
    <property type="match status" value="1"/>
</dbReference>
<dbReference type="PANTHER" id="PTHR30290:SF72">
    <property type="entry name" value="HTH-TYPE TRANSCRIPTIONAL REGULATOR SGRR"/>
    <property type="match status" value="1"/>
</dbReference>
<dbReference type="PANTHER" id="PTHR30290">
    <property type="entry name" value="PERIPLASMIC BINDING COMPONENT OF ABC TRANSPORTER"/>
    <property type="match status" value="1"/>
</dbReference>
<dbReference type="Pfam" id="PF00496">
    <property type="entry name" value="SBP_bac_5"/>
    <property type="match status" value="1"/>
</dbReference>
<dbReference type="Pfam" id="PF12793">
    <property type="entry name" value="SgrR_N"/>
    <property type="match status" value="1"/>
</dbReference>
<dbReference type="SUPFAM" id="SSF53850">
    <property type="entry name" value="Periplasmic binding protein-like II"/>
    <property type="match status" value="1"/>
</dbReference>
<proteinExistence type="inferred from homology"/>
<protein>
    <recommendedName>
        <fullName evidence="1">HTH-type transcriptional regulator SgrR</fullName>
    </recommendedName>
</protein>
<evidence type="ECO:0000255" key="1">
    <source>
        <dbReference type="HAMAP-Rule" id="MF_01449"/>
    </source>
</evidence>
<name>SGRR_ECOK1</name>
<reference key="1">
    <citation type="journal article" date="2007" name="J. Bacteriol.">
        <title>The genome sequence of avian pathogenic Escherichia coli strain O1:K1:H7 shares strong similarities with human extraintestinal pathogenic E. coli genomes.</title>
        <authorList>
            <person name="Johnson T.J."/>
            <person name="Kariyawasam S."/>
            <person name="Wannemuehler Y."/>
            <person name="Mangiamele P."/>
            <person name="Johnson S.J."/>
            <person name="Doetkott C."/>
            <person name="Skyberg J.A."/>
            <person name="Lynne A.M."/>
            <person name="Johnson J.R."/>
            <person name="Nolan L.K."/>
        </authorList>
    </citation>
    <scope>NUCLEOTIDE SEQUENCE [LARGE SCALE GENOMIC DNA]</scope>
</reference>
<keyword id="KW-0010">Activator</keyword>
<keyword id="KW-0238">DNA-binding</keyword>
<keyword id="KW-1185">Reference proteome</keyword>
<keyword id="KW-0678">Repressor</keyword>
<keyword id="KW-0804">Transcription</keyword>
<keyword id="KW-0805">Transcription regulation</keyword>
<gene>
    <name evidence="1" type="primary">sgrR</name>
    <name type="ordered locus">Ecok1_00640</name>
    <name type="ORF">APECO1_1913</name>
</gene>